<gene>
    <name type="ordered locus">SAK_2020</name>
</gene>
<name>Y2020_STRA1</name>
<proteinExistence type="inferred from homology"/>
<comment type="similarity">
    <text evidence="1">Belongs to the UPF0246 family.</text>
</comment>
<dbReference type="EMBL" id="CP000114">
    <property type="protein sequence ID" value="ABA44961.1"/>
    <property type="molecule type" value="Genomic_DNA"/>
</dbReference>
<dbReference type="SMR" id="Q3JYP3"/>
<dbReference type="KEGG" id="sak:SAK_2020"/>
<dbReference type="HOGENOM" id="CLU_061989_2_1_9"/>
<dbReference type="GO" id="GO:0005829">
    <property type="term" value="C:cytosol"/>
    <property type="evidence" value="ECO:0007669"/>
    <property type="project" value="TreeGrafter"/>
</dbReference>
<dbReference type="GO" id="GO:0033194">
    <property type="term" value="P:response to hydroperoxide"/>
    <property type="evidence" value="ECO:0007669"/>
    <property type="project" value="TreeGrafter"/>
</dbReference>
<dbReference type="HAMAP" id="MF_00652">
    <property type="entry name" value="UPF0246"/>
    <property type="match status" value="1"/>
</dbReference>
<dbReference type="InterPro" id="IPR005583">
    <property type="entry name" value="YaaA"/>
</dbReference>
<dbReference type="NCBIfam" id="NF002543">
    <property type="entry name" value="PRK02101.1-4"/>
    <property type="match status" value="1"/>
</dbReference>
<dbReference type="PANTHER" id="PTHR30283:SF4">
    <property type="entry name" value="PEROXIDE STRESS RESISTANCE PROTEIN YAAA"/>
    <property type="match status" value="1"/>
</dbReference>
<dbReference type="PANTHER" id="PTHR30283">
    <property type="entry name" value="PEROXIDE STRESS RESPONSE PROTEIN YAAA"/>
    <property type="match status" value="1"/>
</dbReference>
<dbReference type="Pfam" id="PF03883">
    <property type="entry name" value="H2O2_YaaD"/>
    <property type="match status" value="1"/>
</dbReference>
<protein>
    <recommendedName>
        <fullName evidence="1">UPF0246 protein SAK_2020</fullName>
    </recommendedName>
</protein>
<sequence>MIKILIPTAKEMKVCQNIARPKLSAQTQIIIDYFSTLTVSDLEDIYRINTSAARCEAQRWQDFKCKQLTLNPAIKLFNGLMYRNIKRHNLSISEAQFMENSVFITSALYGIIPAMTLISPHRLDFNTKIKINNNSLKVFWRENYDTFMQSDDIMVSLLSNEFETVFSPKERQKLIHLNFIEDRDGQLKTHSTISKKARGKCLTAMMENNCQTLEHLKQLRFDGFCYDNELSDSKQLTFVKKQT</sequence>
<organism>
    <name type="scientific">Streptococcus agalactiae serotype Ia (strain ATCC 27591 / A909 / CDC SS700)</name>
    <dbReference type="NCBI Taxonomy" id="205921"/>
    <lineage>
        <taxon>Bacteria</taxon>
        <taxon>Bacillati</taxon>
        <taxon>Bacillota</taxon>
        <taxon>Bacilli</taxon>
        <taxon>Lactobacillales</taxon>
        <taxon>Streptococcaceae</taxon>
        <taxon>Streptococcus</taxon>
    </lineage>
</organism>
<feature type="chain" id="PRO_0000262066" description="UPF0246 protein SAK_2020">
    <location>
        <begin position="1"/>
        <end position="243"/>
    </location>
</feature>
<reference key="1">
    <citation type="journal article" date="2005" name="Proc. Natl. Acad. Sci. U.S.A.">
        <title>Genome analysis of multiple pathogenic isolates of Streptococcus agalactiae: implications for the microbial 'pan-genome'.</title>
        <authorList>
            <person name="Tettelin H."/>
            <person name="Masignani V."/>
            <person name="Cieslewicz M.J."/>
            <person name="Donati C."/>
            <person name="Medini D."/>
            <person name="Ward N.L."/>
            <person name="Angiuoli S.V."/>
            <person name="Crabtree J."/>
            <person name="Jones A.L."/>
            <person name="Durkin A.S."/>
            <person name="DeBoy R.T."/>
            <person name="Davidsen T.M."/>
            <person name="Mora M."/>
            <person name="Scarselli M."/>
            <person name="Margarit y Ros I."/>
            <person name="Peterson J.D."/>
            <person name="Hauser C.R."/>
            <person name="Sundaram J.P."/>
            <person name="Nelson W.C."/>
            <person name="Madupu R."/>
            <person name="Brinkac L.M."/>
            <person name="Dodson R.J."/>
            <person name="Rosovitz M.J."/>
            <person name="Sullivan S.A."/>
            <person name="Daugherty S.C."/>
            <person name="Haft D.H."/>
            <person name="Selengut J."/>
            <person name="Gwinn M.L."/>
            <person name="Zhou L."/>
            <person name="Zafar N."/>
            <person name="Khouri H."/>
            <person name="Radune D."/>
            <person name="Dimitrov G."/>
            <person name="Watkins K."/>
            <person name="O'Connor K.J."/>
            <person name="Smith S."/>
            <person name="Utterback T.R."/>
            <person name="White O."/>
            <person name="Rubens C.E."/>
            <person name="Grandi G."/>
            <person name="Madoff L.C."/>
            <person name="Kasper D.L."/>
            <person name="Telford J.L."/>
            <person name="Wessels M.R."/>
            <person name="Rappuoli R."/>
            <person name="Fraser C.M."/>
        </authorList>
    </citation>
    <scope>NUCLEOTIDE SEQUENCE [LARGE SCALE GENOMIC DNA]</scope>
    <source>
        <strain>ATCC 27591 / A909 / CDC SS700</strain>
    </source>
</reference>
<accession>Q3JYP3</accession>
<evidence type="ECO:0000255" key="1">
    <source>
        <dbReference type="HAMAP-Rule" id="MF_00652"/>
    </source>
</evidence>